<reference key="1">
    <citation type="journal article" date="2004" name="Nat. Biotechnol.">
        <title>Complete sequence and comparative genome analysis of the dairy bacterium Streptococcus thermophilus.</title>
        <authorList>
            <person name="Bolotin A."/>
            <person name="Quinquis B."/>
            <person name="Renault P."/>
            <person name="Sorokin A."/>
            <person name="Ehrlich S.D."/>
            <person name="Kulakauskas S."/>
            <person name="Lapidus A."/>
            <person name="Goltsman E."/>
            <person name="Mazur M."/>
            <person name="Pusch G.D."/>
            <person name="Fonstein M."/>
            <person name="Overbeek R."/>
            <person name="Kyprides N."/>
            <person name="Purnelle B."/>
            <person name="Prozzi D."/>
            <person name="Ngui K."/>
            <person name="Masuy D."/>
            <person name="Hancy F."/>
            <person name="Burteau S."/>
            <person name="Boutry M."/>
            <person name="Delcour J."/>
            <person name="Goffeau A."/>
            <person name="Hols P."/>
        </authorList>
    </citation>
    <scope>NUCLEOTIDE SEQUENCE [LARGE SCALE GENOMIC DNA]</scope>
    <source>
        <strain>ATCC BAA-250 / LMG 18311</strain>
    </source>
</reference>
<keyword id="KW-0131">Cell cycle</keyword>
<keyword id="KW-0132">Cell division</keyword>
<keyword id="KW-0238">DNA-binding</keyword>
<keyword id="KW-1185">Reference proteome</keyword>
<accession>Q5M4R7</accession>
<evidence type="ECO:0000255" key="1">
    <source>
        <dbReference type="HAMAP-Rule" id="MF_01420"/>
    </source>
</evidence>
<sequence>MSFTIKVKEEIIAASSKDIAELSALIKMSGSVGLTNQGLTLSISTENAKIARHIYQLIENRYRCNPELRHYNKTNLKKNRVYTVFVAENVNDILSDLQLADSFFGFETGIETSIMEDDDAGRSYLRGAFLATGTVRDPEKGRYQLEIFSVYQDHAEDLASLMKKFMLDAKVLQHKNGFVTYLQKAEDIMDFLIVIGAMTSKEIFEEVKIMRETRNDLNRANNAETANIARTISASMKTINNIIKIMDTVGLEILPVELRQIAQLRIANPDYSIQQIADSIEPPLTKSGVNHRLRKINKIADDL</sequence>
<feature type="chain" id="PRO_0000376596" description="Probable cell division protein WhiA">
    <location>
        <begin position="1"/>
        <end position="303"/>
    </location>
</feature>
<feature type="DNA-binding region" description="H-T-H motif" evidence="1">
    <location>
        <begin position="272"/>
        <end position="303"/>
    </location>
</feature>
<gene>
    <name evidence="1" type="primary">whiA</name>
    <name type="ordered locus">stu0833</name>
</gene>
<protein>
    <recommendedName>
        <fullName evidence="1">Probable cell division protein WhiA</fullName>
    </recommendedName>
</protein>
<comment type="function">
    <text evidence="1">Involved in cell division and chromosome segregation.</text>
</comment>
<comment type="similarity">
    <text evidence="1">Belongs to the WhiA family.</text>
</comment>
<proteinExistence type="inferred from homology"/>
<name>WHIA_STRT2</name>
<dbReference type="EMBL" id="CP000023">
    <property type="protein sequence ID" value="AAV60509.1"/>
    <property type="molecule type" value="Genomic_DNA"/>
</dbReference>
<dbReference type="RefSeq" id="WP_002945081.1">
    <property type="nucleotide sequence ID" value="NC_006448.1"/>
</dbReference>
<dbReference type="SMR" id="Q5M4R7"/>
<dbReference type="STRING" id="264199.stu0833"/>
<dbReference type="GeneID" id="66898719"/>
<dbReference type="KEGG" id="stl:stu0833"/>
<dbReference type="eggNOG" id="COG1481">
    <property type="taxonomic scope" value="Bacteria"/>
</dbReference>
<dbReference type="HOGENOM" id="CLU_053282_0_0_9"/>
<dbReference type="Proteomes" id="UP000001170">
    <property type="component" value="Chromosome"/>
</dbReference>
<dbReference type="GO" id="GO:0003677">
    <property type="term" value="F:DNA binding"/>
    <property type="evidence" value="ECO:0007669"/>
    <property type="project" value="UniProtKB-UniRule"/>
</dbReference>
<dbReference type="GO" id="GO:0051301">
    <property type="term" value="P:cell division"/>
    <property type="evidence" value="ECO:0007669"/>
    <property type="project" value="UniProtKB-UniRule"/>
</dbReference>
<dbReference type="GO" id="GO:0043937">
    <property type="term" value="P:regulation of sporulation"/>
    <property type="evidence" value="ECO:0007669"/>
    <property type="project" value="InterPro"/>
</dbReference>
<dbReference type="Gene3D" id="3.10.28.10">
    <property type="entry name" value="Homing endonucleases"/>
    <property type="match status" value="1"/>
</dbReference>
<dbReference type="HAMAP" id="MF_01420">
    <property type="entry name" value="HTH_type_WhiA"/>
    <property type="match status" value="1"/>
</dbReference>
<dbReference type="InterPro" id="IPR027434">
    <property type="entry name" value="Homing_endonucl"/>
</dbReference>
<dbReference type="InterPro" id="IPR018478">
    <property type="entry name" value="Sporu_reg_WhiA_N_dom"/>
</dbReference>
<dbReference type="InterPro" id="IPR003802">
    <property type="entry name" value="Sporulation_regulator_WhiA"/>
</dbReference>
<dbReference type="InterPro" id="IPR023054">
    <property type="entry name" value="Sporulation_regulator_WhiA_C"/>
</dbReference>
<dbReference type="InterPro" id="IPR039518">
    <property type="entry name" value="WhiA_LAGLIDADG_dom"/>
</dbReference>
<dbReference type="NCBIfam" id="TIGR00647">
    <property type="entry name" value="DNA_bind_WhiA"/>
    <property type="match status" value="1"/>
</dbReference>
<dbReference type="PANTHER" id="PTHR37307">
    <property type="entry name" value="CELL DIVISION PROTEIN WHIA-RELATED"/>
    <property type="match status" value="1"/>
</dbReference>
<dbReference type="PANTHER" id="PTHR37307:SF1">
    <property type="entry name" value="CELL DIVISION PROTEIN WHIA-RELATED"/>
    <property type="match status" value="1"/>
</dbReference>
<dbReference type="Pfam" id="PF02650">
    <property type="entry name" value="HTH_WhiA"/>
    <property type="match status" value="1"/>
</dbReference>
<dbReference type="Pfam" id="PF14527">
    <property type="entry name" value="LAGLIDADG_WhiA"/>
    <property type="match status" value="1"/>
</dbReference>
<dbReference type="Pfam" id="PF10298">
    <property type="entry name" value="WhiA_N"/>
    <property type="match status" value="1"/>
</dbReference>
<dbReference type="SUPFAM" id="SSF55608">
    <property type="entry name" value="Homing endonucleases"/>
    <property type="match status" value="1"/>
</dbReference>
<organism>
    <name type="scientific">Streptococcus thermophilus (strain ATCC BAA-250 / LMG 18311)</name>
    <dbReference type="NCBI Taxonomy" id="264199"/>
    <lineage>
        <taxon>Bacteria</taxon>
        <taxon>Bacillati</taxon>
        <taxon>Bacillota</taxon>
        <taxon>Bacilli</taxon>
        <taxon>Lactobacillales</taxon>
        <taxon>Streptococcaceae</taxon>
        <taxon>Streptococcus</taxon>
    </lineage>
</organism>